<dbReference type="EMBL" id="DS231666">
    <property type="protein sequence ID" value="ESU13277.1"/>
    <property type="molecule type" value="Genomic_DNA"/>
</dbReference>
<dbReference type="EMBL" id="HG970335">
    <property type="protein sequence ID" value="CEF84055.1"/>
    <property type="molecule type" value="Genomic_DNA"/>
</dbReference>
<dbReference type="RefSeq" id="XP_011326784.1">
    <property type="nucleotide sequence ID" value="XM_011328482.1"/>
</dbReference>
<dbReference type="SMR" id="Q4I6S5"/>
<dbReference type="FunCoup" id="Q4I6S5">
    <property type="interactions" value="553"/>
</dbReference>
<dbReference type="STRING" id="229533.Q4I6S5"/>
<dbReference type="GeneID" id="23554181"/>
<dbReference type="KEGG" id="fgr:FGSG_07083"/>
<dbReference type="VEuPathDB" id="FungiDB:FGRAMPH1_01G23919"/>
<dbReference type="eggNOG" id="KOG0997">
    <property type="taxonomic scope" value="Eukaryota"/>
</dbReference>
<dbReference type="HOGENOM" id="CLU_014574_5_0_1"/>
<dbReference type="InParanoid" id="Q4I6S5"/>
<dbReference type="OrthoDB" id="56834at110618"/>
<dbReference type="PHI-base" id="PHI:6898"/>
<dbReference type="Proteomes" id="UP000070720">
    <property type="component" value="Chromosome 4"/>
</dbReference>
<dbReference type="GO" id="GO:0000329">
    <property type="term" value="C:fungal-type vacuole membrane"/>
    <property type="evidence" value="ECO:0007669"/>
    <property type="project" value="TreeGrafter"/>
</dbReference>
<dbReference type="GO" id="GO:0035658">
    <property type="term" value="C:Mon1-Ccz1 complex"/>
    <property type="evidence" value="ECO:0007669"/>
    <property type="project" value="TreeGrafter"/>
</dbReference>
<dbReference type="GO" id="GO:0032585">
    <property type="term" value="C:multivesicular body membrane"/>
    <property type="evidence" value="ECO:0007669"/>
    <property type="project" value="UniProtKB-SubCell"/>
</dbReference>
<dbReference type="GO" id="GO:0006914">
    <property type="term" value="P:autophagy"/>
    <property type="evidence" value="ECO:0007669"/>
    <property type="project" value="UniProtKB-KW"/>
</dbReference>
<dbReference type="GO" id="GO:0006623">
    <property type="term" value="P:protein targeting to vacuole"/>
    <property type="evidence" value="ECO:0007669"/>
    <property type="project" value="InterPro"/>
</dbReference>
<dbReference type="GO" id="GO:0016192">
    <property type="term" value="P:vesicle-mediated transport"/>
    <property type="evidence" value="ECO:0007669"/>
    <property type="project" value="InterPro"/>
</dbReference>
<dbReference type="InterPro" id="IPR043972">
    <property type="entry name" value="FUZ/MON1/HPS1_longin_1"/>
</dbReference>
<dbReference type="InterPro" id="IPR043971">
    <property type="entry name" value="FUZ/MON1/HPS1_longin_2"/>
</dbReference>
<dbReference type="InterPro" id="IPR043970">
    <property type="entry name" value="FUZ/MON1/HPS1_longin_3"/>
</dbReference>
<dbReference type="InterPro" id="IPR004353">
    <property type="entry name" value="Mon1"/>
</dbReference>
<dbReference type="PANTHER" id="PTHR13027">
    <property type="entry name" value="SAND PROTEIN-RELATED"/>
    <property type="match status" value="1"/>
</dbReference>
<dbReference type="PANTHER" id="PTHR13027:SF7">
    <property type="entry name" value="VACUOLAR FUSION PROTEIN MON1 HOMOLOG"/>
    <property type="match status" value="1"/>
</dbReference>
<dbReference type="Pfam" id="PF19036">
    <property type="entry name" value="Fuz_longin_1"/>
    <property type="match status" value="1"/>
</dbReference>
<dbReference type="Pfam" id="PF19037">
    <property type="entry name" value="Fuz_longin_2"/>
    <property type="match status" value="1"/>
</dbReference>
<dbReference type="Pfam" id="PF19038">
    <property type="entry name" value="Fuz_longin_3"/>
    <property type="match status" value="1"/>
</dbReference>
<dbReference type="PRINTS" id="PR01546">
    <property type="entry name" value="YEAST73DUF"/>
</dbReference>
<reference key="1">
    <citation type="journal article" date="2007" name="Science">
        <title>The Fusarium graminearum genome reveals a link between localized polymorphism and pathogen specialization.</title>
        <authorList>
            <person name="Cuomo C.A."/>
            <person name="Gueldener U."/>
            <person name="Xu J.-R."/>
            <person name="Trail F."/>
            <person name="Turgeon B.G."/>
            <person name="Di Pietro A."/>
            <person name="Walton J.D."/>
            <person name="Ma L.-J."/>
            <person name="Baker S.E."/>
            <person name="Rep M."/>
            <person name="Adam G."/>
            <person name="Antoniw J."/>
            <person name="Baldwin T."/>
            <person name="Calvo S.E."/>
            <person name="Chang Y.-L."/>
            <person name="DeCaprio D."/>
            <person name="Gale L.R."/>
            <person name="Gnerre S."/>
            <person name="Goswami R.S."/>
            <person name="Hammond-Kosack K."/>
            <person name="Harris L.J."/>
            <person name="Hilburn K."/>
            <person name="Kennell J.C."/>
            <person name="Kroken S."/>
            <person name="Magnuson J.K."/>
            <person name="Mannhaupt G."/>
            <person name="Mauceli E.W."/>
            <person name="Mewes H.-W."/>
            <person name="Mitterbauer R."/>
            <person name="Muehlbauer G."/>
            <person name="Muensterkoetter M."/>
            <person name="Nelson D."/>
            <person name="O'Donnell K."/>
            <person name="Ouellet T."/>
            <person name="Qi W."/>
            <person name="Quesneville H."/>
            <person name="Roncero M.I.G."/>
            <person name="Seong K.-Y."/>
            <person name="Tetko I.V."/>
            <person name="Urban M."/>
            <person name="Waalwijk C."/>
            <person name="Ward T.J."/>
            <person name="Yao J."/>
            <person name="Birren B.W."/>
            <person name="Kistler H.C."/>
        </authorList>
    </citation>
    <scope>NUCLEOTIDE SEQUENCE [LARGE SCALE GENOMIC DNA]</scope>
    <source>
        <strain>ATCC MYA-4620 / CBS 123657 / FGSC 9075 / NRRL 31084 / PH-1</strain>
    </source>
</reference>
<reference key="2">
    <citation type="journal article" date="2010" name="Nature">
        <title>Comparative genomics reveals mobile pathogenicity chromosomes in Fusarium.</title>
        <authorList>
            <person name="Ma L.-J."/>
            <person name="van der Does H.C."/>
            <person name="Borkovich K.A."/>
            <person name="Coleman J.J."/>
            <person name="Daboussi M.-J."/>
            <person name="Di Pietro A."/>
            <person name="Dufresne M."/>
            <person name="Freitag M."/>
            <person name="Grabherr M."/>
            <person name="Henrissat B."/>
            <person name="Houterman P.M."/>
            <person name="Kang S."/>
            <person name="Shim W.-B."/>
            <person name="Woloshuk C."/>
            <person name="Xie X."/>
            <person name="Xu J.-R."/>
            <person name="Antoniw J."/>
            <person name="Baker S.E."/>
            <person name="Bluhm B.H."/>
            <person name="Breakspear A."/>
            <person name="Brown D.W."/>
            <person name="Butchko R.A.E."/>
            <person name="Chapman S."/>
            <person name="Coulson R."/>
            <person name="Coutinho P.M."/>
            <person name="Danchin E.G.J."/>
            <person name="Diener A."/>
            <person name="Gale L.R."/>
            <person name="Gardiner D.M."/>
            <person name="Goff S."/>
            <person name="Hammond-Kosack K.E."/>
            <person name="Hilburn K."/>
            <person name="Hua-Van A."/>
            <person name="Jonkers W."/>
            <person name="Kazan K."/>
            <person name="Kodira C.D."/>
            <person name="Koehrsen M."/>
            <person name="Kumar L."/>
            <person name="Lee Y.-H."/>
            <person name="Li L."/>
            <person name="Manners J.M."/>
            <person name="Miranda-Saavedra D."/>
            <person name="Mukherjee M."/>
            <person name="Park G."/>
            <person name="Park J."/>
            <person name="Park S.-Y."/>
            <person name="Proctor R.H."/>
            <person name="Regev A."/>
            <person name="Ruiz-Roldan M.C."/>
            <person name="Sain D."/>
            <person name="Sakthikumar S."/>
            <person name="Sykes S."/>
            <person name="Schwartz D.C."/>
            <person name="Turgeon B.G."/>
            <person name="Wapinski I."/>
            <person name="Yoder O."/>
            <person name="Young S."/>
            <person name="Zeng Q."/>
            <person name="Zhou S."/>
            <person name="Galagan J."/>
            <person name="Cuomo C.A."/>
            <person name="Kistler H.C."/>
            <person name="Rep M."/>
        </authorList>
    </citation>
    <scope>GENOME REANNOTATION</scope>
    <source>
        <strain>ATCC MYA-4620 / CBS 123657 / FGSC 9075 / NRRL 31084 / PH-1</strain>
    </source>
</reference>
<reference key="3">
    <citation type="journal article" date="2015" name="BMC Genomics">
        <title>The completed genome sequence of the pathogenic ascomycete fungus Fusarium graminearum.</title>
        <authorList>
            <person name="King R."/>
            <person name="Urban M."/>
            <person name="Hammond-Kosack M.C.U."/>
            <person name="Hassani-Pak K."/>
            <person name="Hammond-Kosack K.E."/>
        </authorList>
    </citation>
    <scope>NUCLEOTIDE SEQUENCE [LARGE SCALE GENOMIC DNA]</scope>
    <source>
        <strain>ATCC MYA-4620 / CBS 123657 / FGSC 9075 / NRRL 31084 / PH-1</strain>
    </source>
</reference>
<comment type="function">
    <text evidence="2">In complex with CCZ1, is required for multiple vacuole delivery pathways including the cytoplasm to vacuole transport (Cvt), autophagy, pexophagy and endocytosis. The MON1-CCZ1 complex acts at the fusion of vesicles with the vacuole, through its regulation of the SNARE complex during the coordinated priming and docking stages of fusion, and particularly at the stage of tethering/docking.</text>
</comment>
<comment type="subcellular location">
    <subcellularLocation>
        <location evidence="1">Endosome</location>
        <location evidence="1">Multivesicular body membrane</location>
        <topology evidence="1">Peripheral membrane protein</topology>
    </subcellularLocation>
    <subcellularLocation>
        <location evidence="1">Prevacuolar compartment membrane</location>
        <topology evidence="1">Peripheral membrane protein</topology>
    </subcellularLocation>
    <subcellularLocation>
        <location evidence="1">Vacuole membrane</location>
        <topology evidence="1">Peripheral membrane protein</topology>
    </subcellularLocation>
</comment>
<comment type="similarity">
    <text evidence="4">Belongs to the MON1/SAND family.</text>
</comment>
<name>MON1_GIBZE</name>
<sequence length="601" mass="65904">MDSDSINPKPISSVDEDYRPPLPPRPSTNATDPGSLQGQATTAITPVEIQTLSFPDGSRGTFSTPGPDSIPSPAESGGASPNRHDSSTSAEVDETASLMSFAPTMRPAGDIASLLAGELHKKSPAWKMLRTQSASVLPFEKGRIGADDRFVEFYREFDPLPEEYDEDAEEDVLRLWKSKLKHYLILSSAGKPIWSRYGDLSLINSSMGVVQTIISFYEGAKNPLQGFSAGDTRFVILTKGPLYFVAISKLGESDSQIQAQLDALYMQILSTLTLPRLTHIFANRPSTDLRKPLEGTEGLLSSLADTFTKGSSSALLGSLECLRLRKSQRHAINNTFLKLRAEKLLYGLIVAGGKLVSVIRPRRHSLHPSDLQLIFNMLFESDGIKGGGGENWIPICLPAFNNKGYLYMYVSFFDGTSGEQASSPAAAQGRSSDEEIAMILVSPDRESFFELKQMRDNVAQQLAKNGTLAIIQNATRVGRPKIHEIAPGSQVSHFLYKSRANVQFCMASLEPHFTGLVSRRRLMTTYHELHASIHAKHSHLKVLHGVGDDATSLAWTTPVFEFYCVAGPNVSRATITQGANKIIQWAKREEERLFIIGGGVF</sequence>
<accession>Q4I6S5</accession>
<accession>A0A0E0SC92</accession>
<accession>I1RSG5</accession>
<accession>V6RH37</accession>
<keyword id="KW-0072">Autophagy</keyword>
<keyword id="KW-0967">Endosome</keyword>
<keyword id="KW-0472">Membrane</keyword>
<keyword id="KW-0653">Protein transport</keyword>
<keyword id="KW-1185">Reference proteome</keyword>
<keyword id="KW-0813">Transport</keyword>
<keyword id="KW-0926">Vacuole</keyword>
<feature type="chain" id="PRO_0000278862" description="Vacuolar fusion protein MON1">
    <location>
        <begin position="1"/>
        <end position="601"/>
    </location>
</feature>
<feature type="region of interest" description="Disordered" evidence="3">
    <location>
        <begin position="1"/>
        <end position="93"/>
    </location>
</feature>
<feature type="compositionally biased region" description="Polar residues" evidence="3">
    <location>
        <begin position="27"/>
        <end position="53"/>
    </location>
</feature>
<protein>
    <recommendedName>
        <fullName>Vacuolar fusion protein MON1</fullName>
    </recommendedName>
</protein>
<gene>
    <name type="primary">MON1</name>
    <name type="ORF">FGRRES_07083</name>
    <name type="ORF">FGSG_07083</name>
</gene>
<proteinExistence type="inferred from homology"/>
<evidence type="ECO:0000250" key="1"/>
<evidence type="ECO:0000250" key="2">
    <source>
        <dbReference type="UniProtKB" id="P53129"/>
    </source>
</evidence>
<evidence type="ECO:0000256" key="3">
    <source>
        <dbReference type="SAM" id="MobiDB-lite"/>
    </source>
</evidence>
<evidence type="ECO:0000305" key="4"/>
<organism>
    <name type="scientific">Gibberella zeae (strain ATCC MYA-4620 / CBS 123657 / FGSC 9075 / NRRL 31084 / PH-1)</name>
    <name type="common">Wheat head blight fungus</name>
    <name type="synonym">Fusarium graminearum</name>
    <dbReference type="NCBI Taxonomy" id="229533"/>
    <lineage>
        <taxon>Eukaryota</taxon>
        <taxon>Fungi</taxon>
        <taxon>Dikarya</taxon>
        <taxon>Ascomycota</taxon>
        <taxon>Pezizomycotina</taxon>
        <taxon>Sordariomycetes</taxon>
        <taxon>Hypocreomycetidae</taxon>
        <taxon>Hypocreales</taxon>
        <taxon>Nectriaceae</taxon>
        <taxon>Fusarium</taxon>
    </lineage>
</organism>